<evidence type="ECO:0000255" key="1">
    <source>
        <dbReference type="HAMAP-Rule" id="MF_00294"/>
    </source>
</evidence>
<evidence type="ECO:0000305" key="2"/>
<accession>B9LIX9</accession>
<comment type="similarity">
    <text evidence="1">Belongs to the bacterial ribosomal protein bL33 family.</text>
</comment>
<protein>
    <recommendedName>
        <fullName evidence="1">Large ribosomal subunit protein bL33</fullName>
    </recommendedName>
    <alternativeName>
        <fullName evidence="2">50S ribosomal protein L33</fullName>
    </alternativeName>
</protein>
<gene>
    <name evidence="1" type="primary">rpmG</name>
    <name type="ordered locus">Chy400_0504</name>
</gene>
<sequence>MASKKGNRIVIKLKSTESGHTYTTEKNRRNDPSRLELRKYDPIVRRHVLYRETK</sequence>
<feature type="chain" id="PRO_1000194051" description="Large ribosomal subunit protein bL33">
    <location>
        <begin position="1"/>
        <end position="54"/>
    </location>
</feature>
<organism>
    <name type="scientific">Chloroflexus aurantiacus (strain ATCC 29364 / DSM 637 / Y-400-fl)</name>
    <dbReference type="NCBI Taxonomy" id="480224"/>
    <lineage>
        <taxon>Bacteria</taxon>
        <taxon>Bacillati</taxon>
        <taxon>Chloroflexota</taxon>
        <taxon>Chloroflexia</taxon>
        <taxon>Chloroflexales</taxon>
        <taxon>Chloroflexineae</taxon>
        <taxon>Chloroflexaceae</taxon>
        <taxon>Chloroflexus</taxon>
    </lineage>
</organism>
<dbReference type="EMBL" id="CP001364">
    <property type="protein sequence ID" value="ACM51941.1"/>
    <property type="molecule type" value="Genomic_DNA"/>
</dbReference>
<dbReference type="KEGG" id="chl:Chy400_0504"/>
<dbReference type="HOGENOM" id="CLU_190949_3_0_0"/>
<dbReference type="OrthoDB" id="9801333at2"/>
<dbReference type="GO" id="GO:0022625">
    <property type="term" value="C:cytosolic large ribosomal subunit"/>
    <property type="evidence" value="ECO:0007669"/>
    <property type="project" value="TreeGrafter"/>
</dbReference>
<dbReference type="GO" id="GO:0003735">
    <property type="term" value="F:structural constituent of ribosome"/>
    <property type="evidence" value="ECO:0007669"/>
    <property type="project" value="InterPro"/>
</dbReference>
<dbReference type="GO" id="GO:0006412">
    <property type="term" value="P:translation"/>
    <property type="evidence" value="ECO:0007669"/>
    <property type="project" value="UniProtKB-UniRule"/>
</dbReference>
<dbReference type="FunFam" id="2.20.28.120:FF:000012">
    <property type="entry name" value="50S ribosomal protein L33"/>
    <property type="match status" value="1"/>
</dbReference>
<dbReference type="Gene3D" id="2.20.28.120">
    <property type="entry name" value="Ribosomal protein L33"/>
    <property type="match status" value="1"/>
</dbReference>
<dbReference type="HAMAP" id="MF_00294">
    <property type="entry name" value="Ribosomal_bL33"/>
    <property type="match status" value="1"/>
</dbReference>
<dbReference type="InterPro" id="IPR001705">
    <property type="entry name" value="Ribosomal_bL33"/>
</dbReference>
<dbReference type="InterPro" id="IPR018264">
    <property type="entry name" value="Ribosomal_bL33_CS"/>
</dbReference>
<dbReference type="InterPro" id="IPR038584">
    <property type="entry name" value="Ribosomal_bL33_sf"/>
</dbReference>
<dbReference type="InterPro" id="IPR011332">
    <property type="entry name" value="Ribosomal_zn-bd"/>
</dbReference>
<dbReference type="NCBIfam" id="NF001860">
    <property type="entry name" value="PRK00595.1"/>
    <property type="match status" value="1"/>
</dbReference>
<dbReference type="NCBIfam" id="TIGR01023">
    <property type="entry name" value="rpmG_bact"/>
    <property type="match status" value="1"/>
</dbReference>
<dbReference type="PANTHER" id="PTHR15238">
    <property type="entry name" value="54S RIBOSOMAL PROTEIN L39, MITOCHONDRIAL"/>
    <property type="match status" value="1"/>
</dbReference>
<dbReference type="PANTHER" id="PTHR15238:SF1">
    <property type="entry name" value="LARGE RIBOSOMAL SUBUNIT PROTEIN BL33M"/>
    <property type="match status" value="1"/>
</dbReference>
<dbReference type="Pfam" id="PF00471">
    <property type="entry name" value="Ribosomal_L33"/>
    <property type="match status" value="1"/>
</dbReference>
<dbReference type="SUPFAM" id="SSF57829">
    <property type="entry name" value="Zn-binding ribosomal proteins"/>
    <property type="match status" value="1"/>
</dbReference>
<dbReference type="PROSITE" id="PS00582">
    <property type="entry name" value="RIBOSOMAL_L33"/>
    <property type="match status" value="1"/>
</dbReference>
<keyword id="KW-0687">Ribonucleoprotein</keyword>
<keyword id="KW-0689">Ribosomal protein</keyword>
<reference key="1">
    <citation type="submission" date="2009-01" db="EMBL/GenBank/DDBJ databases">
        <title>Complete sequence of Chloroflexus sp. Y-400-fl.</title>
        <authorList>
            <consortium name="US DOE Joint Genome Institute"/>
            <person name="Lucas S."/>
            <person name="Copeland A."/>
            <person name="Lapidus A."/>
            <person name="Glavina del Rio T."/>
            <person name="Dalin E."/>
            <person name="Tice H."/>
            <person name="Bruce D."/>
            <person name="Goodwin L."/>
            <person name="Pitluck S."/>
            <person name="Sims D."/>
            <person name="Kiss H."/>
            <person name="Brettin T."/>
            <person name="Detter J.C."/>
            <person name="Han C."/>
            <person name="Larimer F."/>
            <person name="Land M."/>
            <person name="Hauser L."/>
            <person name="Kyrpides N."/>
            <person name="Ovchinnikova G."/>
            <person name="Bryant D.A."/>
            <person name="Richardson P."/>
        </authorList>
    </citation>
    <scope>NUCLEOTIDE SEQUENCE [LARGE SCALE GENOMIC DNA]</scope>
    <source>
        <strain>ATCC 29364 / DSM 637 / Y-400-fl</strain>
    </source>
</reference>
<name>RL33_CHLSY</name>
<proteinExistence type="inferred from homology"/>